<sequence>MSQSQRNSDGWTPRTRLGRMVQDGDVTSMEQALNSGLPLKEPELVDQLLPGLDDEVLDINMVQRMTDSGRRVKFRCVVAIGNRNGFLGYAEGRDDQVGSAIQKAIDVAKLNLISVDRGSGSWEDSAGGVNSLTRNAEGKAGSVTVEVMPAPQGLGLAAAETVSNILELAGVEDAWTRSNGNTRTTVNLAKATYNALRNASQSRTPRRAAAKQREQEVSE</sequence>
<dbReference type="EMBL" id="AM180088">
    <property type="protein sequence ID" value="CAJ52929.1"/>
    <property type="molecule type" value="Genomic_DNA"/>
</dbReference>
<dbReference type="RefSeq" id="WP_011572042.1">
    <property type="nucleotide sequence ID" value="NC_008212.1"/>
</dbReference>
<dbReference type="SMR" id="Q18GG9"/>
<dbReference type="STRING" id="362976.HQ_2822A"/>
<dbReference type="GeneID" id="4194664"/>
<dbReference type="KEGG" id="hwa:HQ_2822A"/>
<dbReference type="eggNOG" id="arCOG04087">
    <property type="taxonomic scope" value="Archaea"/>
</dbReference>
<dbReference type="HOGENOM" id="CLU_065898_0_1_2"/>
<dbReference type="Proteomes" id="UP000001975">
    <property type="component" value="Chromosome"/>
</dbReference>
<dbReference type="GO" id="GO:0022627">
    <property type="term" value="C:cytosolic small ribosomal subunit"/>
    <property type="evidence" value="ECO:0007669"/>
    <property type="project" value="TreeGrafter"/>
</dbReference>
<dbReference type="GO" id="GO:0019843">
    <property type="term" value="F:rRNA binding"/>
    <property type="evidence" value="ECO:0007669"/>
    <property type="project" value="UniProtKB-UniRule"/>
</dbReference>
<dbReference type="GO" id="GO:0003735">
    <property type="term" value="F:structural constituent of ribosome"/>
    <property type="evidence" value="ECO:0007669"/>
    <property type="project" value="InterPro"/>
</dbReference>
<dbReference type="GO" id="GO:0006412">
    <property type="term" value="P:translation"/>
    <property type="evidence" value="ECO:0007669"/>
    <property type="project" value="UniProtKB-UniRule"/>
</dbReference>
<dbReference type="FunFam" id="3.30.160.20:FF:000002">
    <property type="entry name" value="40S ribosomal protein S2"/>
    <property type="match status" value="1"/>
</dbReference>
<dbReference type="Gene3D" id="3.30.160.20">
    <property type="match status" value="1"/>
</dbReference>
<dbReference type="Gene3D" id="3.30.230.10">
    <property type="match status" value="1"/>
</dbReference>
<dbReference type="HAMAP" id="MF_01307_A">
    <property type="entry name" value="Ribosomal_uS5_A"/>
    <property type="match status" value="1"/>
</dbReference>
<dbReference type="InterPro" id="IPR020568">
    <property type="entry name" value="Ribosomal_Su5_D2-typ_SF"/>
</dbReference>
<dbReference type="InterPro" id="IPR000851">
    <property type="entry name" value="Ribosomal_uS5"/>
</dbReference>
<dbReference type="InterPro" id="IPR047866">
    <property type="entry name" value="Ribosomal_uS5_arc"/>
</dbReference>
<dbReference type="InterPro" id="IPR005324">
    <property type="entry name" value="Ribosomal_uS5_C"/>
</dbReference>
<dbReference type="InterPro" id="IPR005711">
    <property type="entry name" value="Ribosomal_uS5_euk/arc"/>
</dbReference>
<dbReference type="InterPro" id="IPR013810">
    <property type="entry name" value="Ribosomal_uS5_N"/>
</dbReference>
<dbReference type="InterPro" id="IPR018192">
    <property type="entry name" value="Ribosomal_uS5_N_CS"/>
</dbReference>
<dbReference type="InterPro" id="IPR014721">
    <property type="entry name" value="Ribsml_uS5_D2-typ_fold_subgr"/>
</dbReference>
<dbReference type="NCBIfam" id="NF003125">
    <property type="entry name" value="PRK04044.1"/>
    <property type="match status" value="1"/>
</dbReference>
<dbReference type="NCBIfam" id="TIGR01020">
    <property type="entry name" value="uS5_euk_arch"/>
    <property type="match status" value="1"/>
</dbReference>
<dbReference type="PANTHER" id="PTHR13718:SF4">
    <property type="entry name" value="40S RIBOSOMAL PROTEIN S2"/>
    <property type="match status" value="1"/>
</dbReference>
<dbReference type="PANTHER" id="PTHR13718">
    <property type="entry name" value="RIBOSOMAL S SUBUNIT"/>
    <property type="match status" value="1"/>
</dbReference>
<dbReference type="Pfam" id="PF00333">
    <property type="entry name" value="Ribosomal_S5"/>
    <property type="match status" value="1"/>
</dbReference>
<dbReference type="Pfam" id="PF03719">
    <property type="entry name" value="Ribosomal_S5_C"/>
    <property type="match status" value="1"/>
</dbReference>
<dbReference type="SUPFAM" id="SSF54768">
    <property type="entry name" value="dsRNA-binding domain-like"/>
    <property type="match status" value="1"/>
</dbReference>
<dbReference type="SUPFAM" id="SSF54211">
    <property type="entry name" value="Ribosomal protein S5 domain 2-like"/>
    <property type="match status" value="1"/>
</dbReference>
<dbReference type="PROSITE" id="PS00585">
    <property type="entry name" value="RIBOSOMAL_S5"/>
    <property type="match status" value="1"/>
</dbReference>
<dbReference type="PROSITE" id="PS50881">
    <property type="entry name" value="S5_DSRBD"/>
    <property type="match status" value="1"/>
</dbReference>
<feature type="chain" id="PRO_0000293206" description="Small ribosomal subunit protein uS5">
    <location>
        <begin position="1"/>
        <end position="219"/>
    </location>
</feature>
<feature type="domain" description="S5 DRBM" evidence="1">
    <location>
        <begin position="52"/>
        <end position="115"/>
    </location>
</feature>
<feature type="region of interest" description="Disordered" evidence="2">
    <location>
        <begin position="196"/>
        <end position="219"/>
    </location>
</feature>
<proteinExistence type="inferred from homology"/>
<comment type="function">
    <text evidence="1">With S4 and S12 plays an important role in translational accuracy.</text>
</comment>
<comment type="subunit">
    <text evidence="1">Part of the 30S ribosomal subunit. Contacts protein S4.</text>
</comment>
<comment type="domain">
    <text>The N-terminal domain interacts with the head of the 30S subunit; the C-terminal domain interacts with the body and contacts protein S4. The interaction surface between S4 and S5 is involved in control of translational fidelity.</text>
</comment>
<comment type="similarity">
    <text evidence="1">Belongs to the universal ribosomal protein uS5 family.</text>
</comment>
<name>RS5_HALWD</name>
<organism>
    <name type="scientific">Haloquadratum walsbyi (strain DSM 16790 / HBSQ001)</name>
    <dbReference type="NCBI Taxonomy" id="362976"/>
    <lineage>
        <taxon>Archaea</taxon>
        <taxon>Methanobacteriati</taxon>
        <taxon>Methanobacteriota</taxon>
        <taxon>Stenosarchaea group</taxon>
        <taxon>Halobacteria</taxon>
        <taxon>Halobacteriales</taxon>
        <taxon>Haloferacaceae</taxon>
        <taxon>Haloquadratum</taxon>
    </lineage>
</organism>
<keyword id="KW-1185">Reference proteome</keyword>
<keyword id="KW-0687">Ribonucleoprotein</keyword>
<keyword id="KW-0689">Ribosomal protein</keyword>
<keyword id="KW-0694">RNA-binding</keyword>
<keyword id="KW-0699">rRNA-binding</keyword>
<gene>
    <name evidence="1" type="primary">rps5</name>
    <name type="ordered locus">HQ_2822A</name>
</gene>
<evidence type="ECO:0000255" key="1">
    <source>
        <dbReference type="HAMAP-Rule" id="MF_01307"/>
    </source>
</evidence>
<evidence type="ECO:0000256" key="2">
    <source>
        <dbReference type="SAM" id="MobiDB-lite"/>
    </source>
</evidence>
<evidence type="ECO:0000305" key="3"/>
<reference key="1">
    <citation type="journal article" date="2006" name="BMC Genomics">
        <title>The genome of the square archaeon Haloquadratum walsbyi: life at the limits of water activity.</title>
        <authorList>
            <person name="Bolhuis H."/>
            <person name="Palm P."/>
            <person name="Wende A."/>
            <person name="Falb M."/>
            <person name="Rampp M."/>
            <person name="Rodriguez-Valera F."/>
            <person name="Pfeiffer F."/>
            <person name="Oesterhelt D."/>
        </authorList>
    </citation>
    <scope>NUCLEOTIDE SEQUENCE [LARGE SCALE GENOMIC DNA]</scope>
    <source>
        <strain>DSM 16790 / HBSQ001</strain>
    </source>
</reference>
<accession>Q18GG9</accession>
<protein>
    <recommendedName>
        <fullName evidence="1">Small ribosomal subunit protein uS5</fullName>
    </recommendedName>
    <alternativeName>
        <fullName evidence="3">30S ribosomal protein S5</fullName>
    </alternativeName>
</protein>